<keyword id="KW-0963">Cytoplasm</keyword>
<keyword id="KW-0671">Queuosine biosynthesis</keyword>
<keyword id="KW-1185">Reference proteome</keyword>
<keyword id="KW-0949">S-adenosyl-L-methionine</keyword>
<keyword id="KW-0808">Transferase</keyword>
<name>QUEA_PARD8</name>
<gene>
    <name evidence="1" type="primary">queA</name>
    <name type="ordered locus">BDI_2405</name>
</gene>
<dbReference type="EC" id="2.4.99.17" evidence="1"/>
<dbReference type="EMBL" id="CP000140">
    <property type="protein sequence ID" value="ABR44130.1"/>
    <property type="molecule type" value="Genomic_DNA"/>
</dbReference>
<dbReference type="RefSeq" id="WP_005853911.1">
    <property type="nucleotide sequence ID" value="NZ_LR215978.1"/>
</dbReference>
<dbReference type="SMR" id="A6LEL6"/>
<dbReference type="STRING" id="435591.BDI_2405"/>
<dbReference type="PaxDb" id="435591-BDI_2405"/>
<dbReference type="GeneID" id="93522398"/>
<dbReference type="KEGG" id="pdi:BDI_2405"/>
<dbReference type="eggNOG" id="COG0809">
    <property type="taxonomic scope" value="Bacteria"/>
</dbReference>
<dbReference type="HOGENOM" id="CLU_039110_1_0_10"/>
<dbReference type="BioCyc" id="PDIS435591:G1G5A-2472-MONOMER"/>
<dbReference type="UniPathway" id="UPA00392"/>
<dbReference type="Proteomes" id="UP000000566">
    <property type="component" value="Chromosome"/>
</dbReference>
<dbReference type="GO" id="GO:0005737">
    <property type="term" value="C:cytoplasm"/>
    <property type="evidence" value="ECO:0007669"/>
    <property type="project" value="UniProtKB-SubCell"/>
</dbReference>
<dbReference type="GO" id="GO:0051075">
    <property type="term" value="F:S-adenosylmethionine:tRNA ribosyltransferase-isomerase activity"/>
    <property type="evidence" value="ECO:0007669"/>
    <property type="project" value="UniProtKB-EC"/>
</dbReference>
<dbReference type="GO" id="GO:0008616">
    <property type="term" value="P:queuosine biosynthetic process"/>
    <property type="evidence" value="ECO:0007669"/>
    <property type="project" value="UniProtKB-UniRule"/>
</dbReference>
<dbReference type="GO" id="GO:0002099">
    <property type="term" value="P:tRNA wobble guanine modification"/>
    <property type="evidence" value="ECO:0007669"/>
    <property type="project" value="TreeGrafter"/>
</dbReference>
<dbReference type="FunFam" id="2.40.10.240:FF:000002">
    <property type="entry name" value="S-adenosylmethionine:tRNA ribosyltransferase-isomerase"/>
    <property type="match status" value="1"/>
</dbReference>
<dbReference type="Gene3D" id="2.40.10.240">
    <property type="entry name" value="QueA-like"/>
    <property type="match status" value="1"/>
</dbReference>
<dbReference type="Gene3D" id="3.40.1780.10">
    <property type="entry name" value="QueA-like"/>
    <property type="match status" value="1"/>
</dbReference>
<dbReference type="HAMAP" id="MF_00113">
    <property type="entry name" value="QueA"/>
    <property type="match status" value="1"/>
</dbReference>
<dbReference type="InterPro" id="IPR003699">
    <property type="entry name" value="QueA"/>
</dbReference>
<dbReference type="InterPro" id="IPR042118">
    <property type="entry name" value="QueA_dom1"/>
</dbReference>
<dbReference type="InterPro" id="IPR042119">
    <property type="entry name" value="QueA_dom2"/>
</dbReference>
<dbReference type="InterPro" id="IPR036100">
    <property type="entry name" value="QueA_sf"/>
</dbReference>
<dbReference type="NCBIfam" id="NF001140">
    <property type="entry name" value="PRK00147.1"/>
    <property type="match status" value="1"/>
</dbReference>
<dbReference type="NCBIfam" id="TIGR00113">
    <property type="entry name" value="queA"/>
    <property type="match status" value="1"/>
</dbReference>
<dbReference type="PANTHER" id="PTHR30307">
    <property type="entry name" value="S-ADENOSYLMETHIONINE:TRNA RIBOSYLTRANSFERASE-ISOMERASE"/>
    <property type="match status" value="1"/>
</dbReference>
<dbReference type="PANTHER" id="PTHR30307:SF0">
    <property type="entry name" value="S-ADENOSYLMETHIONINE:TRNA RIBOSYLTRANSFERASE-ISOMERASE"/>
    <property type="match status" value="1"/>
</dbReference>
<dbReference type="Pfam" id="PF02547">
    <property type="entry name" value="Queuosine_synth"/>
    <property type="match status" value="1"/>
</dbReference>
<dbReference type="SUPFAM" id="SSF111337">
    <property type="entry name" value="QueA-like"/>
    <property type="match status" value="1"/>
</dbReference>
<comment type="function">
    <text evidence="1">Transfers and isomerizes the ribose moiety from AdoMet to the 7-aminomethyl group of 7-deazaguanine (preQ1-tRNA) to give epoxyqueuosine (oQ-tRNA).</text>
</comment>
<comment type="catalytic activity">
    <reaction evidence="1">
        <text>7-aminomethyl-7-carbaguanosine(34) in tRNA + S-adenosyl-L-methionine = epoxyqueuosine(34) in tRNA + adenine + L-methionine + 2 H(+)</text>
        <dbReference type="Rhea" id="RHEA:32155"/>
        <dbReference type="Rhea" id="RHEA-COMP:10342"/>
        <dbReference type="Rhea" id="RHEA-COMP:18582"/>
        <dbReference type="ChEBI" id="CHEBI:15378"/>
        <dbReference type="ChEBI" id="CHEBI:16708"/>
        <dbReference type="ChEBI" id="CHEBI:57844"/>
        <dbReference type="ChEBI" id="CHEBI:59789"/>
        <dbReference type="ChEBI" id="CHEBI:82833"/>
        <dbReference type="ChEBI" id="CHEBI:194443"/>
        <dbReference type="EC" id="2.4.99.17"/>
    </reaction>
</comment>
<comment type="pathway">
    <text evidence="1">tRNA modification; tRNA-queuosine biosynthesis.</text>
</comment>
<comment type="subunit">
    <text evidence="1">Monomer.</text>
</comment>
<comment type="subcellular location">
    <subcellularLocation>
        <location evidence="1">Cytoplasm</location>
    </subcellularLocation>
</comment>
<comment type="similarity">
    <text evidence="1">Belongs to the QueA family.</text>
</comment>
<sequence>MKLSKFKFNLPSELIALHPAKNRDESRLMVVHRDTGEIEHREFKDILDYYGKGDVFIFNNTKVFPARLYGNKEKTGARIEVFLLRELNEDLRLWDVLVDPARKIRIGNKLYFGEDDSMVAEVIDNTTSRGRTLRFLYDGNHDEFKKALYALGETPLPKYIEREVEPEDEDRYQNIFAAEEGAVVAPAAGLHFSRELMKRLEIKDCQFAFLTLHSGLGNFREIDVEDLTKHKMDSEQMVVNADVVDIVNKGKDEGHKVCAVGTSVMRAIETAVSTDGHLKEFEGWTNKFIFPPYDFSVATSMVTNFHMPLSTLLMMTASFGGYELIMDAYDIALKEKYRFGAYGDAMLIL</sequence>
<reference key="1">
    <citation type="journal article" date="2007" name="PLoS Biol.">
        <title>Evolution of symbiotic bacteria in the distal human intestine.</title>
        <authorList>
            <person name="Xu J."/>
            <person name="Mahowald M.A."/>
            <person name="Ley R.E."/>
            <person name="Lozupone C.A."/>
            <person name="Hamady M."/>
            <person name="Martens E.C."/>
            <person name="Henrissat B."/>
            <person name="Coutinho P.M."/>
            <person name="Minx P."/>
            <person name="Latreille P."/>
            <person name="Cordum H."/>
            <person name="Van Brunt A."/>
            <person name="Kim K."/>
            <person name="Fulton R.S."/>
            <person name="Fulton L.A."/>
            <person name="Clifton S.W."/>
            <person name="Wilson R.K."/>
            <person name="Knight R.D."/>
            <person name="Gordon J.I."/>
        </authorList>
    </citation>
    <scope>NUCLEOTIDE SEQUENCE [LARGE SCALE GENOMIC DNA]</scope>
    <source>
        <strain>ATCC 8503 / DSM 20701 / CIP 104284 / JCM 5825 / NCTC 11152</strain>
    </source>
</reference>
<proteinExistence type="inferred from homology"/>
<evidence type="ECO:0000255" key="1">
    <source>
        <dbReference type="HAMAP-Rule" id="MF_00113"/>
    </source>
</evidence>
<accession>A6LEL6</accession>
<feature type="chain" id="PRO_1000015241" description="S-adenosylmethionine:tRNA ribosyltransferase-isomerase">
    <location>
        <begin position="1"/>
        <end position="349"/>
    </location>
</feature>
<protein>
    <recommendedName>
        <fullName evidence="1">S-adenosylmethionine:tRNA ribosyltransferase-isomerase</fullName>
        <ecNumber evidence="1">2.4.99.17</ecNumber>
    </recommendedName>
    <alternativeName>
        <fullName evidence="1">Queuosine biosynthesis protein QueA</fullName>
    </alternativeName>
</protein>
<organism>
    <name type="scientific">Parabacteroides distasonis (strain ATCC 8503 / DSM 20701 / CIP 104284 / JCM 5825 / NCTC 11152)</name>
    <dbReference type="NCBI Taxonomy" id="435591"/>
    <lineage>
        <taxon>Bacteria</taxon>
        <taxon>Pseudomonadati</taxon>
        <taxon>Bacteroidota</taxon>
        <taxon>Bacteroidia</taxon>
        <taxon>Bacteroidales</taxon>
        <taxon>Tannerellaceae</taxon>
        <taxon>Parabacteroides</taxon>
    </lineage>
</organism>